<protein>
    <recommendedName>
        <fullName evidence="1">Probable endonuclease 4</fullName>
        <ecNumber evidence="1">3.1.21.2</ecNumber>
    </recommendedName>
    <alternativeName>
        <fullName evidence="1">Endodeoxyribonuclease IV</fullName>
    </alternativeName>
    <alternativeName>
        <fullName evidence="1">Endonuclease IV</fullName>
    </alternativeName>
</protein>
<organism>
    <name type="scientific">Thermotoga neapolitana (strain ATCC 49049 / DSM 4359 / NBRC 107923 / NS-E)</name>
    <dbReference type="NCBI Taxonomy" id="309803"/>
    <lineage>
        <taxon>Bacteria</taxon>
        <taxon>Thermotogati</taxon>
        <taxon>Thermotogota</taxon>
        <taxon>Thermotogae</taxon>
        <taxon>Thermotogales</taxon>
        <taxon>Thermotogaceae</taxon>
        <taxon>Thermotoga</taxon>
    </lineage>
</organism>
<comment type="function">
    <text evidence="1">Endonuclease IV plays a role in DNA repair. It cleaves phosphodiester bonds at apurinic or apyrimidinic (AP) sites, generating a 3'-hydroxyl group and a 5'-terminal sugar phosphate.</text>
</comment>
<comment type="catalytic activity">
    <reaction evidence="1">
        <text>Endonucleolytic cleavage to 5'-phosphooligonucleotide end-products.</text>
        <dbReference type="EC" id="3.1.21.2"/>
    </reaction>
</comment>
<comment type="cofactor">
    <cofactor evidence="1">
        <name>Zn(2+)</name>
        <dbReference type="ChEBI" id="CHEBI:29105"/>
    </cofactor>
    <text evidence="1">Binds 3 Zn(2+) ions.</text>
</comment>
<comment type="similarity">
    <text evidence="1">Belongs to the AP endonuclease 2 family.</text>
</comment>
<proteinExistence type="inferred from homology"/>
<keyword id="KW-0227">DNA damage</keyword>
<keyword id="KW-0234">DNA repair</keyword>
<keyword id="KW-0255">Endonuclease</keyword>
<keyword id="KW-0378">Hydrolase</keyword>
<keyword id="KW-0479">Metal-binding</keyword>
<keyword id="KW-0540">Nuclease</keyword>
<keyword id="KW-0862">Zinc</keyword>
<evidence type="ECO:0000255" key="1">
    <source>
        <dbReference type="HAMAP-Rule" id="MF_00152"/>
    </source>
</evidence>
<gene>
    <name evidence="1" type="primary">nfo</name>
    <name type="ordered locus">CTN_0292</name>
</gene>
<name>END4_THENN</name>
<feature type="chain" id="PRO_1000123338" description="Probable endonuclease 4">
    <location>
        <begin position="1"/>
        <end position="287"/>
    </location>
</feature>
<feature type="binding site" evidence="1">
    <location>
        <position position="69"/>
    </location>
    <ligand>
        <name>Zn(2+)</name>
        <dbReference type="ChEBI" id="CHEBI:29105"/>
        <label>1</label>
    </ligand>
</feature>
<feature type="binding site" evidence="1">
    <location>
        <position position="109"/>
    </location>
    <ligand>
        <name>Zn(2+)</name>
        <dbReference type="ChEBI" id="CHEBI:29105"/>
        <label>1</label>
    </ligand>
</feature>
<feature type="binding site" evidence="1">
    <location>
        <position position="144"/>
    </location>
    <ligand>
        <name>Zn(2+)</name>
        <dbReference type="ChEBI" id="CHEBI:29105"/>
        <label>1</label>
    </ligand>
</feature>
<feature type="binding site" evidence="1">
    <location>
        <position position="144"/>
    </location>
    <ligand>
        <name>Zn(2+)</name>
        <dbReference type="ChEBI" id="CHEBI:29105"/>
        <label>2</label>
    </ligand>
</feature>
<feature type="binding site" evidence="1">
    <location>
        <position position="178"/>
    </location>
    <ligand>
        <name>Zn(2+)</name>
        <dbReference type="ChEBI" id="CHEBI:29105"/>
        <label>2</label>
    </ligand>
</feature>
<feature type="binding site" evidence="1">
    <location>
        <position position="181"/>
    </location>
    <ligand>
        <name>Zn(2+)</name>
        <dbReference type="ChEBI" id="CHEBI:29105"/>
        <label>3</label>
    </ligand>
</feature>
<feature type="binding site" evidence="1">
    <location>
        <position position="215"/>
    </location>
    <ligand>
        <name>Zn(2+)</name>
        <dbReference type="ChEBI" id="CHEBI:29105"/>
        <label>2</label>
    </ligand>
</feature>
<feature type="binding site" evidence="1">
    <location>
        <position position="228"/>
    </location>
    <ligand>
        <name>Zn(2+)</name>
        <dbReference type="ChEBI" id="CHEBI:29105"/>
        <label>3</label>
    </ligand>
</feature>
<feature type="binding site" evidence="1">
    <location>
        <position position="230"/>
    </location>
    <ligand>
        <name>Zn(2+)</name>
        <dbReference type="ChEBI" id="CHEBI:29105"/>
        <label>3</label>
    </ligand>
</feature>
<feature type="binding site" evidence="1">
    <location>
        <position position="260"/>
    </location>
    <ligand>
        <name>Zn(2+)</name>
        <dbReference type="ChEBI" id="CHEBI:29105"/>
        <label>2</label>
    </ligand>
</feature>
<reference key="1">
    <citation type="submission" date="2007-11" db="EMBL/GenBank/DDBJ databases">
        <title>The genome sequence of the hyperthermophilic bacterium Thermotoga neapolitana.</title>
        <authorList>
            <person name="Lim S.K."/>
            <person name="Kim J.S."/>
            <person name="Cha S.H."/>
            <person name="Park B.C."/>
            <person name="Lee D.S."/>
            <person name="Tae H.S."/>
            <person name="Kim S.-J."/>
            <person name="Kim J.J."/>
            <person name="Park K.J."/>
            <person name="Lee S.Y."/>
        </authorList>
    </citation>
    <scope>NUCLEOTIDE SEQUENCE [LARGE SCALE GENOMIC DNA]</scope>
    <source>
        <strain>ATCC 49049 / DSM 4359 / NBRC 107923 / NS-E</strain>
    </source>
</reference>
<sequence>MIKIGAHMPISKGFDRVPKDTIDIGGNSFQIFPHNARSWQAKLPTDEMATKFKREMKKHRIDWENAFCHCGYLVNLASPKEDIWQKSVDLLKTEVEICRKLGIKYLNIHPGSHLGTGEEEGINRIARGLNEVLNNTEDVIILLENVSQKGGNIGYRLEHLKRIIDLVDQKDRVAITYDTCHGFDSGYDITKKEGVESLLSEIENLFGLERLKMIHLNDSKYPLGAAKDRHERIGSGFIGEAGFAVFFSFKEVQRVPWILETPGGNEEHAEDIKKVSEIIEKYRIEVD</sequence>
<accession>B9KBS2</accession>
<dbReference type="EC" id="3.1.21.2" evidence="1"/>
<dbReference type="EMBL" id="CP000916">
    <property type="protein sequence ID" value="ACM22468.1"/>
    <property type="molecule type" value="Genomic_DNA"/>
</dbReference>
<dbReference type="RefSeq" id="WP_015918797.1">
    <property type="nucleotide sequence ID" value="NC_011978.1"/>
</dbReference>
<dbReference type="SMR" id="B9KBS2"/>
<dbReference type="STRING" id="309803.CTN_0292"/>
<dbReference type="KEGG" id="tna:CTN_0292"/>
<dbReference type="eggNOG" id="COG0648">
    <property type="taxonomic scope" value="Bacteria"/>
</dbReference>
<dbReference type="HOGENOM" id="CLU_025885_0_1_0"/>
<dbReference type="Proteomes" id="UP000000445">
    <property type="component" value="Chromosome"/>
</dbReference>
<dbReference type="GO" id="GO:0008833">
    <property type="term" value="F:deoxyribonuclease IV (phage-T4-induced) activity"/>
    <property type="evidence" value="ECO:0007669"/>
    <property type="project" value="UniProtKB-UniRule"/>
</dbReference>
<dbReference type="GO" id="GO:0003677">
    <property type="term" value="F:DNA binding"/>
    <property type="evidence" value="ECO:0007669"/>
    <property type="project" value="InterPro"/>
</dbReference>
<dbReference type="GO" id="GO:0003906">
    <property type="term" value="F:DNA-(apurinic or apyrimidinic site) endonuclease activity"/>
    <property type="evidence" value="ECO:0007669"/>
    <property type="project" value="TreeGrafter"/>
</dbReference>
<dbReference type="GO" id="GO:0008081">
    <property type="term" value="F:phosphoric diester hydrolase activity"/>
    <property type="evidence" value="ECO:0007669"/>
    <property type="project" value="TreeGrafter"/>
</dbReference>
<dbReference type="GO" id="GO:0008270">
    <property type="term" value="F:zinc ion binding"/>
    <property type="evidence" value="ECO:0007669"/>
    <property type="project" value="UniProtKB-UniRule"/>
</dbReference>
<dbReference type="GO" id="GO:0006284">
    <property type="term" value="P:base-excision repair"/>
    <property type="evidence" value="ECO:0007669"/>
    <property type="project" value="TreeGrafter"/>
</dbReference>
<dbReference type="CDD" id="cd00019">
    <property type="entry name" value="AP2Ec"/>
    <property type="match status" value="1"/>
</dbReference>
<dbReference type="FunFam" id="3.20.20.150:FF:000001">
    <property type="entry name" value="Probable endonuclease 4"/>
    <property type="match status" value="1"/>
</dbReference>
<dbReference type="Gene3D" id="3.20.20.150">
    <property type="entry name" value="Divalent-metal-dependent TIM barrel enzymes"/>
    <property type="match status" value="1"/>
</dbReference>
<dbReference type="HAMAP" id="MF_00152">
    <property type="entry name" value="Nfo"/>
    <property type="match status" value="1"/>
</dbReference>
<dbReference type="InterPro" id="IPR001719">
    <property type="entry name" value="AP_endonuc_2"/>
</dbReference>
<dbReference type="InterPro" id="IPR018246">
    <property type="entry name" value="AP_endonuc_F2_Zn_BS"/>
</dbReference>
<dbReference type="InterPro" id="IPR036237">
    <property type="entry name" value="Xyl_isomerase-like_sf"/>
</dbReference>
<dbReference type="InterPro" id="IPR013022">
    <property type="entry name" value="Xyl_isomerase-like_TIM-brl"/>
</dbReference>
<dbReference type="NCBIfam" id="TIGR00587">
    <property type="entry name" value="nfo"/>
    <property type="match status" value="1"/>
</dbReference>
<dbReference type="PANTHER" id="PTHR21445:SF0">
    <property type="entry name" value="APURINIC-APYRIMIDINIC ENDONUCLEASE"/>
    <property type="match status" value="1"/>
</dbReference>
<dbReference type="PANTHER" id="PTHR21445">
    <property type="entry name" value="ENDONUCLEASE IV ENDODEOXYRIBONUCLEASE IV"/>
    <property type="match status" value="1"/>
</dbReference>
<dbReference type="Pfam" id="PF01261">
    <property type="entry name" value="AP_endonuc_2"/>
    <property type="match status" value="1"/>
</dbReference>
<dbReference type="SMART" id="SM00518">
    <property type="entry name" value="AP2Ec"/>
    <property type="match status" value="1"/>
</dbReference>
<dbReference type="SUPFAM" id="SSF51658">
    <property type="entry name" value="Xylose isomerase-like"/>
    <property type="match status" value="1"/>
</dbReference>
<dbReference type="PROSITE" id="PS00730">
    <property type="entry name" value="AP_NUCLEASE_F2_2"/>
    <property type="match status" value="1"/>
</dbReference>
<dbReference type="PROSITE" id="PS00731">
    <property type="entry name" value="AP_NUCLEASE_F2_3"/>
    <property type="match status" value="1"/>
</dbReference>
<dbReference type="PROSITE" id="PS51432">
    <property type="entry name" value="AP_NUCLEASE_F2_4"/>
    <property type="match status" value="1"/>
</dbReference>